<organism>
    <name type="scientific">Alkaliphilus metalliredigens (strain QYMF)</name>
    <dbReference type="NCBI Taxonomy" id="293826"/>
    <lineage>
        <taxon>Bacteria</taxon>
        <taxon>Bacillati</taxon>
        <taxon>Bacillota</taxon>
        <taxon>Clostridia</taxon>
        <taxon>Peptostreptococcales</taxon>
        <taxon>Natronincolaceae</taxon>
        <taxon>Alkaliphilus</taxon>
    </lineage>
</organism>
<keyword id="KW-0963">Cytoplasm</keyword>
<keyword id="KW-0227">DNA damage</keyword>
<keyword id="KW-0228">DNA excision</keyword>
<keyword id="KW-0234">DNA repair</keyword>
<keyword id="KW-0267">Excision nuclease</keyword>
<keyword id="KW-1185">Reference proteome</keyword>
<keyword id="KW-0742">SOS response</keyword>
<name>UVRC_ALKMQ</name>
<evidence type="ECO:0000255" key="1">
    <source>
        <dbReference type="HAMAP-Rule" id="MF_00203"/>
    </source>
</evidence>
<protein>
    <recommendedName>
        <fullName evidence="1">UvrABC system protein C</fullName>
        <shortName evidence="1">Protein UvrC</shortName>
    </recommendedName>
    <alternativeName>
        <fullName evidence="1">Excinuclease ABC subunit C</fullName>
    </alternativeName>
</protein>
<feature type="chain" id="PRO_1000077748" description="UvrABC system protein C">
    <location>
        <begin position="1"/>
        <end position="622"/>
    </location>
</feature>
<feature type="domain" description="GIY-YIG" evidence="1">
    <location>
        <begin position="13"/>
        <end position="92"/>
    </location>
</feature>
<feature type="domain" description="UVR" evidence="1">
    <location>
        <begin position="205"/>
        <end position="240"/>
    </location>
</feature>
<gene>
    <name evidence="1" type="primary">uvrC</name>
    <name type="ordered locus">Amet_4124</name>
</gene>
<reference key="1">
    <citation type="journal article" date="2016" name="Genome Announc.">
        <title>Complete genome sequence of Alkaliphilus metalliredigens strain QYMF, an alkaliphilic and metal-reducing bacterium isolated from borax-contaminated leachate ponds.</title>
        <authorList>
            <person name="Hwang C."/>
            <person name="Copeland A."/>
            <person name="Lucas S."/>
            <person name="Lapidus A."/>
            <person name="Barry K."/>
            <person name="Detter J.C."/>
            <person name="Glavina Del Rio T."/>
            <person name="Hammon N."/>
            <person name="Israni S."/>
            <person name="Dalin E."/>
            <person name="Tice H."/>
            <person name="Pitluck S."/>
            <person name="Chertkov O."/>
            <person name="Brettin T."/>
            <person name="Bruce D."/>
            <person name="Han C."/>
            <person name="Schmutz J."/>
            <person name="Larimer F."/>
            <person name="Land M.L."/>
            <person name="Hauser L."/>
            <person name="Kyrpides N."/>
            <person name="Mikhailova N."/>
            <person name="Ye Q."/>
            <person name="Zhou J."/>
            <person name="Richardson P."/>
            <person name="Fields M.W."/>
        </authorList>
    </citation>
    <scope>NUCLEOTIDE SEQUENCE [LARGE SCALE GENOMIC DNA]</scope>
    <source>
        <strain>QYMF</strain>
    </source>
</reference>
<proteinExistence type="inferred from homology"/>
<sequence length="622" mass="72204">MFDIKEQLKLLPDKPGVYLMKNKANEIIYVGKAISLKNRVRQYFQSSNNQHPKVRAMVTHINFFEYIVTDSELEALILECNLIKENRPKYNVLLRDDKTYPYIKVTMNETFPRVLKTRKVLKDKAKYFGPYTNISALNETLEVIHQMYPIRVCGKNIEKMIERQERPCLNYHIRKCIGPCTGMVNDETYQQMIHEIILFLGGKEDELIKKIEEKMKRAAEKMDFEGAAHYRDQRQALLDIIERQKVVSVNDIDQDIIAMAKGEQESCVQVFFVRGGKLVQREHYILTTREDEDEKEILSAFIKQFYGETNFIPKEVLVEREVEDQELMAQWLTNKRGNHVKVRAPLRGEKKSMIQLVKRNAALTMGQREETQRKSKEKTEGAMVVLQEALGLADAIHRVEAFDISNTQGMESVGSMVVFEGGKPKNKDYRRFKIKTIQGANDYGSIEEIIYRRYKRGVDETKAMIENTMTVQEGKFSLFPDLIMVDGGLGQVTSVKKGLAALGILIPVCGMVKDERHRTRGLVYEGKEIPIERPSHLLRFITQVQDEVHRFAITYHRSLRTKSILHSVLEDIPGIGEKRRKSLMKHFESIDKMKQATIEELIEVEGLNRKVAENMYHFFRKQ</sequence>
<dbReference type="EMBL" id="CP000724">
    <property type="protein sequence ID" value="ABR50205.1"/>
    <property type="molecule type" value="Genomic_DNA"/>
</dbReference>
<dbReference type="RefSeq" id="WP_012065153.1">
    <property type="nucleotide sequence ID" value="NC_009633.1"/>
</dbReference>
<dbReference type="SMR" id="A6TVI7"/>
<dbReference type="STRING" id="293826.Amet_4124"/>
<dbReference type="KEGG" id="amt:Amet_4124"/>
<dbReference type="eggNOG" id="COG0322">
    <property type="taxonomic scope" value="Bacteria"/>
</dbReference>
<dbReference type="HOGENOM" id="CLU_014841_3_2_9"/>
<dbReference type="OrthoDB" id="9804933at2"/>
<dbReference type="Proteomes" id="UP000001572">
    <property type="component" value="Chromosome"/>
</dbReference>
<dbReference type="GO" id="GO:0005737">
    <property type="term" value="C:cytoplasm"/>
    <property type="evidence" value="ECO:0007669"/>
    <property type="project" value="UniProtKB-SubCell"/>
</dbReference>
<dbReference type="GO" id="GO:0009380">
    <property type="term" value="C:excinuclease repair complex"/>
    <property type="evidence" value="ECO:0007669"/>
    <property type="project" value="InterPro"/>
</dbReference>
<dbReference type="GO" id="GO:0003677">
    <property type="term" value="F:DNA binding"/>
    <property type="evidence" value="ECO:0007669"/>
    <property type="project" value="UniProtKB-UniRule"/>
</dbReference>
<dbReference type="GO" id="GO:0009381">
    <property type="term" value="F:excinuclease ABC activity"/>
    <property type="evidence" value="ECO:0007669"/>
    <property type="project" value="UniProtKB-UniRule"/>
</dbReference>
<dbReference type="GO" id="GO:0006289">
    <property type="term" value="P:nucleotide-excision repair"/>
    <property type="evidence" value="ECO:0007669"/>
    <property type="project" value="UniProtKB-UniRule"/>
</dbReference>
<dbReference type="GO" id="GO:0009432">
    <property type="term" value="P:SOS response"/>
    <property type="evidence" value="ECO:0007669"/>
    <property type="project" value="UniProtKB-UniRule"/>
</dbReference>
<dbReference type="CDD" id="cd10434">
    <property type="entry name" value="GIY-YIG_UvrC_Cho"/>
    <property type="match status" value="1"/>
</dbReference>
<dbReference type="FunFam" id="3.40.1440.10:FF:000001">
    <property type="entry name" value="UvrABC system protein C"/>
    <property type="match status" value="1"/>
</dbReference>
<dbReference type="Gene3D" id="1.10.150.20">
    <property type="entry name" value="5' to 3' exonuclease, C-terminal subdomain"/>
    <property type="match status" value="1"/>
</dbReference>
<dbReference type="Gene3D" id="3.40.1440.10">
    <property type="entry name" value="GIY-YIG endonuclease"/>
    <property type="match status" value="1"/>
</dbReference>
<dbReference type="Gene3D" id="4.10.860.10">
    <property type="entry name" value="UVR domain"/>
    <property type="match status" value="1"/>
</dbReference>
<dbReference type="Gene3D" id="3.30.420.340">
    <property type="entry name" value="UvrC, RNAse H endonuclease domain"/>
    <property type="match status" value="1"/>
</dbReference>
<dbReference type="HAMAP" id="MF_00203">
    <property type="entry name" value="UvrC"/>
    <property type="match status" value="1"/>
</dbReference>
<dbReference type="InterPro" id="IPR041663">
    <property type="entry name" value="DisA/LigA_HHH"/>
</dbReference>
<dbReference type="InterPro" id="IPR000305">
    <property type="entry name" value="GIY-YIG_endonuc"/>
</dbReference>
<dbReference type="InterPro" id="IPR035901">
    <property type="entry name" value="GIY-YIG_endonuc_sf"/>
</dbReference>
<dbReference type="InterPro" id="IPR047296">
    <property type="entry name" value="GIY-YIG_UvrC_Cho"/>
</dbReference>
<dbReference type="InterPro" id="IPR003583">
    <property type="entry name" value="Hlx-hairpin-Hlx_DNA-bd_motif"/>
</dbReference>
<dbReference type="InterPro" id="IPR010994">
    <property type="entry name" value="RuvA_2-like"/>
</dbReference>
<dbReference type="InterPro" id="IPR001943">
    <property type="entry name" value="UVR_dom"/>
</dbReference>
<dbReference type="InterPro" id="IPR036876">
    <property type="entry name" value="UVR_dom_sf"/>
</dbReference>
<dbReference type="InterPro" id="IPR050066">
    <property type="entry name" value="UvrABC_protein_C"/>
</dbReference>
<dbReference type="InterPro" id="IPR004791">
    <property type="entry name" value="UvrC"/>
</dbReference>
<dbReference type="InterPro" id="IPR001162">
    <property type="entry name" value="UvrC_RNase_H_dom"/>
</dbReference>
<dbReference type="InterPro" id="IPR038476">
    <property type="entry name" value="UvrC_RNase_H_dom_sf"/>
</dbReference>
<dbReference type="NCBIfam" id="NF001824">
    <property type="entry name" value="PRK00558.1-5"/>
    <property type="match status" value="1"/>
</dbReference>
<dbReference type="NCBIfam" id="TIGR00194">
    <property type="entry name" value="uvrC"/>
    <property type="match status" value="1"/>
</dbReference>
<dbReference type="PANTHER" id="PTHR30562:SF1">
    <property type="entry name" value="UVRABC SYSTEM PROTEIN C"/>
    <property type="match status" value="1"/>
</dbReference>
<dbReference type="PANTHER" id="PTHR30562">
    <property type="entry name" value="UVRC/OXIDOREDUCTASE"/>
    <property type="match status" value="1"/>
</dbReference>
<dbReference type="Pfam" id="PF01541">
    <property type="entry name" value="GIY-YIG"/>
    <property type="match status" value="1"/>
</dbReference>
<dbReference type="Pfam" id="PF12826">
    <property type="entry name" value="HHH_2"/>
    <property type="match status" value="1"/>
</dbReference>
<dbReference type="Pfam" id="PF02151">
    <property type="entry name" value="UVR"/>
    <property type="match status" value="1"/>
</dbReference>
<dbReference type="Pfam" id="PF22920">
    <property type="entry name" value="UvrC_RNaseH"/>
    <property type="match status" value="1"/>
</dbReference>
<dbReference type="Pfam" id="PF08459">
    <property type="entry name" value="UvrC_RNaseH_dom"/>
    <property type="match status" value="1"/>
</dbReference>
<dbReference type="SMART" id="SM00465">
    <property type="entry name" value="GIYc"/>
    <property type="match status" value="1"/>
</dbReference>
<dbReference type="SMART" id="SM00278">
    <property type="entry name" value="HhH1"/>
    <property type="match status" value="2"/>
</dbReference>
<dbReference type="SUPFAM" id="SSF46600">
    <property type="entry name" value="C-terminal UvrC-binding domain of UvrB"/>
    <property type="match status" value="1"/>
</dbReference>
<dbReference type="SUPFAM" id="SSF82771">
    <property type="entry name" value="GIY-YIG endonuclease"/>
    <property type="match status" value="1"/>
</dbReference>
<dbReference type="SUPFAM" id="SSF47781">
    <property type="entry name" value="RuvA domain 2-like"/>
    <property type="match status" value="1"/>
</dbReference>
<dbReference type="PROSITE" id="PS50164">
    <property type="entry name" value="GIY_YIG"/>
    <property type="match status" value="1"/>
</dbReference>
<dbReference type="PROSITE" id="PS50151">
    <property type="entry name" value="UVR"/>
    <property type="match status" value="1"/>
</dbReference>
<dbReference type="PROSITE" id="PS50165">
    <property type="entry name" value="UVRC"/>
    <property type="match status" value="1"/>
</dbReference>
<accession>A6TVI7</accession>
<comment type="function">
    <text evidence="1">The UvrABC repair system catalyzes the recognition and processing of DNA lesions. UvrC both incises the 5' and 3' sides of the lesion. The N-terminal half is responsible for the 3' incision and the C-terminal half is responsible for the 5' incision.</text>
</comment>
<comment type="subunit">
    <text evidence="1">Interacts with UvrB in an incision complex.</text>
</comment>
<comment type="subcellular location">
    <subcellularLocation>
        <location evidence="1">Cytoplasm</location>
    </subcellularLocation>
</comment>
<comment type="similarity">
    <text evidence="1">Belongs to the UvrC family.</text>
</comment>